<proteinExistence type="evidence at transcript level"/>
<comment type="function">
    <text evidence="1">Aux/IAA proteins are short-lived transcriptional factors that function as repressors of early auxin response genes at low auxin concentrations. Repression is thought to result from the interaction with auxin response factors (ARFs), proteins that bind to the auxin-responsive promoter element (AuxRE). Formation of heterodimers with ARF proteins may alter their ability to modulate early auxin response genes expression (By similarity).</text>
</comment>
<comment type="subunit">
    <text evidence="1">Homodimers and heterodimers.</text>
</comment>
<comment type="subcellular location">
    <subcellularLocation>
        <location evidence="1">Nucleus</location>
    </subcellularLocation>
</comment>
<comment type="induction">
    <text>By auxin.</text>
</comment>
<comment type="domain">
    <text evidence="1">The N-terminal half of the protein contains two conserved domains I and II. Domain I includes a slightly degenerated ERF-associated amphiphilic repression (EAR) motif which seems to be involved in the activity of transcriptional repression. Domain II is required for the correct degradation of the protein through the SCF-mediated ubiquitin-proteasome pathway. Interactions between Aux/IAA proteins and auxin response factors (ARFs) occur through their C-terminal dimerization domains III and IV (By similarity).</text>
</comment>
<comment type="similarity">
    <text evidence="4">Belongs to the Aux/IAA family.</text>
</comment>
<keyword id="KW-0927">Auxin signaling pathway</keyword>
<keyword id="KW-0539">Nucleus</keyword>
<keyword id="KW-1185">Reference proteome</keyword>
<keyword id="KW-0678">Repressor</keyword>
<keyword id="KW-0804">Transcription</keyword>
<keyword id="KW-0805">Transcription regulation</keyword>
<gene>
    <name type="primary">AUX28</name>
</gene>
<name>AUX28_SOYBN</name>
<sequence length="243" mass="26847">MGFEETELRLGLPGNGGTEEVLIRKRGFSETETGHEDESATTVDLMLNLSSKEAATTAAAAADPTDKHKTLPKEKTLLPADPAKPPAKTQVVGWPPVRSFRKNMLAVQKSVGEESEKNSSPNASFVKVSMDGAPYLRKVDLKMYKSYRELSDSLGKMFSSFTFGNCESQGMKDFMNESKLNDLLNSSDYVPTYEDKDGDWMLVGDVPWEMFVESCKRLRIMKGKEAIGLGLAPRAMAKCKNRS</sequence>
<protein>
    <recommendedName>
        <fullName>Auxin-induced protein AUX28</fullName>
    </recommendedName>
</protein>
<dbReference type="EMBL" id="J03919">
    <property type="protein sequence ID" value="AAA33945.1"/>
    <property type="molecule type" value="mRNA"/>
</dbReference>
<dbReference type="PIR" id="A28993">
    <property type="entry name" value="A28993"/>
</dbReference>
<dbReference type="RefSeq" id="NP_001236693.3">
    <property type="nucleotide sequence ID" value="NM_001249764.1"/>
</dbReference>
<dbReference type="SMR" id="P13089"/>
<dbReference type="STRING" id="3847.P13089"/>
<dbReference type="PaxDb" id="3847-GLYMA19G34380.1"/>
<dbReference type="GeneID" id="547965"/>
<dbReference type="KEGG" id="gmx:547965"/>
<dbReference type="eggNOG" id="ENOG502QTQA">
    <property type="taxonomic scope" value="Eukaryota"/>
</dbReference>
<dbReference type="InParanoid" id="P13089"/>
<dbReference type="OrthoDB" id="642974at2759"/>
<dbReference type="Proteomes" id="UP000008827">
    <property type="component" value="Unplaced"/>
</dbReference>
<dbReference type="GO" id="GO:0005634">
    <property type="term" value="C:nucleus"/>
    <property type="evidence" value="ECO:0007669"/>
    <property type="project" value="UniProtKB-SubCell"/>
</dbReference>
<dbReference type="GO" id="GO:0009734">
    <property type="term" value="P:auxin-activated signaling pathway"/>
    <property type="evidence" value="ECO:0007669"/>
    <property type="project" value="UniProtKB-KW"/>
</dbReference>
<dbReference type="GO" id="GO:0006355">
    <property type="term" value="P:regulation of DNA-templated transcription"/>
    <property type="evidence" value="ECO:0007669"/>
    <property type="project" value="InterPro"/>
</dbReference>
<dbReference type="FunFam" id="3.10.20.90:FF:000078">
    <property type="entry name" value="Auxin-responsive protein"/>
    <property type="match status" value="1"/>
</dbReference>
<dbReference type="Gene3D" id="3.10.20.90">
    <property type="entry name" value="Phosphatidylinositol 3-kinase Catalytic Subunit, Chain A, domain 1"/>
    <property type="match status" value="1"/>
</dbReference>
<dbReference type="InterPro" id="IPR033389">
    <property type="entry name" value="AUX/IAA_dom"/>
</dbReference>
<dbReference type="InterPro" id="IPR003311">
    <property type="entry name" value="AUX_IAA"/>
</dbReference>
<dbReference type="InterPro" id="IPR053793">
    <property type="entry name" value="PB1-like"/>
</dbReference>
<dbReference type="PANTHER" id="PTHR31734:SF28">
    <property type="entry name" value="AUXIN-RESPONSIVE PROTEIN IAA13"/>
    <property type="match status" value="1"/>
</dbReference>
<dbReference type="PANTHER" id="PTHR31734">
    <property type="entry name" value="AUXIN-RESPONSIVE PROTEIN IAA17"/>
    <property type="match status" value="1"/>
</dbReference>
<dbReference type="Pfam" id="PF02309">
    <property type="entry name" value="AUX_IAA"/>
    <property type="match status" value="1"/>
</dbReference>
<dbReference type="SUPFAM" id="SSF54277">
    <property type="entry name" value="CAD &amp; PB1 domains"/>
    <property type="match status" value="1"/>
</dbReference>
<dbReference type="PROSITE" id="PS51745">
    <property type="entry name" value="PB1"/>
    <property type="match status" value="1"/>
</dbReference>
<accession>P13089</accession>
<evidence type="ECO:0000250" key="1"/>
<evidence type="ECO:0000255" key="2">
    <source>
        <dbReference type="PROSITE-ProRule" id="PRU01081"/>
    </source>
</evidence>
<evidence type="ECO:0000256" key="3">
    <source>
        <dbReference type="SAM" id="MobiDB-lite"/>
    </source>
</evidence>
<evidence type="ECO:0000305" key="4"/>
<organism>
    <name type="scientific">Glycine max</name>
    <name type="common">Soybean</name>
    <name type="synonym">Glycine hispida</name>
    <dbReference type="NCBI Taxonomy" id="3847"/>
    <lineage>
        <taxon>Eukaryota</taxon>
        <taxon>Viridiplantae</taxon>
        <taxon>Streptophyta</taxon>
        <taxon>Embryophyta</taxon>
        <taxon>Tracheophyta</taxon>
        <taxon>Spermatophyta</taxon>
        <taxon>Magnoliopsida</taxon>
        <taxon>eudicotyledons</taxon>
        <taxon>Gunneridae</taxon>
        <taxon>Pentapetalae</taxon>
        <taxon>rosids</taxon>
        <taxon>fabids</taxon>
        <taxon>Fabales</taxon>
        <taxon>Fabaceae</taxon>
        <taxon>Papilionoideae</taxon>
        <taxon>50 kb inversion clade</taxon>
        <taxon>NPAAA clade</taxon>
        <taxon>indigoferoid/millettioid clade</taxon>
        <taxon>Phaseoleae</taxon>
        <taxon>Glycine</taxon>
        <taxon>Glycine subgen. Soja</taxon>
    </lineage>
</organism>
<reference key="1">
    <citation type="journal article" date="1988" name="J. Biol. Chem.">
        <title>Sequence and characterization of two auxin-regulated genes from soybean.</title>
        <authorList>
            <person name="Ainley W.M."/>
            <person name="Walker J.C."/>
            <person name="Nagao R.T."/>
            <person name="Key J.L."/>
        </authorList>
    </citation>
    <scope>NUCLEOTIDE SEQUENCE [MRNA]</scope>
    <source>
        <strain>cv. Corsoy</strain>
    </source>
</reference>
<feature type="chain" id="PRO_0000112869" description="Auxin-induced protein AUX28">
    <location>
        <begin position="1"/>
        <end position="243"/>
    </location>
</feature>
<feature type="domain" description="PB1" evidence="2">
    <location>
        <begin position="123"/>
        <end position="223"/>
    </location>
</feature>
<feature type="region of interest" description="Disordered" evidence="3">
    <location>
        <begin position="54"/>
        <end position="91"/>
    </location>
</feature>
<feature type="short sequence motif" description="EAR-like (transcriptional repression)">
    <location>
        <begin position="8"/>
        <end position="12"/>
    </location>
</feature>
<feature type="compositionally biased region" description="Basic and acidic residues" evidence="3">
    <location>
        <begin position="64"/>
        <end position="76"/>
    </location>
</feature>
<feature type="compositionally biased region" description="Low complexity" evidence="3">
    <location>
        <begin position="77"/>
        <end position="89"/>
    </location>
</feature>